<feature type="initiator methionine" description="Removed" evidence="1">
    <location>
        <position position="1"/>
    </location>
</feature>
<feature type="chain" id="PRO_0000338416" description="Calmodulin-like protein 1">
    <location>
        <begin position="2"/>
        <end position="184"/>
    </location>
</feature>
<feature type="propeptide" id="PRO_0000396747" description="Removed in mature form" evidence="1">
    <location>
        <begin position="185"/>
        <end position="187"/>
    </location>
</feature>
<feature type="domain" description="EF-hand 1" evidence="2">
    <location>
        <begin position="8"/>
        <end position="43"/>
    </location>
</feature>
<feature type="domain" description="EF-hand 2" evidence="2">
    <location>
        <begin position="44"/>
        <end position="79"/>
    </location>
</feature>
<feature type="domain" description="EF-hand 3" evidence="2">
    <location>
        <begin position="81"/>
        <end position="116"/>
    </location>
</feature>
<feature type="domain" description="EF-hand 4" evidence="2">
    <location>
        <begin position="117"/>
        <end position="152"/>
    </location>
</feature>
<feature type="region of interest" description="Disordered" evidence="3">
    <location>
        <begin position="153"/>
        <end position="187"/>
    </location>
</feature>
<feature type="compositionally biased region" description="Basic and acidic residues" evidence="3">
    <location>
        <begin position="154"/>
        <end position="165"/>
    </location>
</feature>
<feature type="compositionally biased region" description="Low complexity" evidence="3">
    <location>
        <begin position="169"/>
        <end position="178"/>
    </location>
</feature>
<feature type="binding site" evidence="2">
    <location>
        <position position="21"/>
    </location>
    <ligand>
        <name>Ca(2+)</name>
        <dbReference type="ChEBI" id="CHEBI:29108"/>
        <label>1</label>
    </ligand>
</feature>
<feature type="binding site" evidence="2">
    <location>
        <position position="23"/>
    </location>
    <ligand>
        <name>Ca(2+)</name>
        <dbReference type="ChEBI" id="CHEBI:29108"/>
        <label>1</label>
    </ligand>
</feature>
<feature type="binding site" evidence="2">
    <location>
        <position position="25"/>
    </location>
    <ligand>
        <name>Ca(2+)</name>
        <dbReference type="ChEBI" id="CHEBI:29108"/>
        <label>1</label>
    </ligand>
</feature>
<feature type="binding site" evidence="2">
    <location>
        <position position="27"/>
    </location>
    <ligand>
        <name>Ca(2+)</name>
        <dbReference type="ChEBI" id="CHEBI:29108"/>
        <label>1</label>
    </ligand>
</feature>
<feature type="binding site" evidence="2">
    <location>
        <position position="32"/>
    </location>
    <ligand>
        <name>Ca(2+)</name>
        <dbReference type="ChEBI" id="CHEBI:29108"/>
        <label>1</label>
    </ligand>
</feature>
<feature type="binding site" evidence="2">
    <location>
        <position position="57"/>
    </location>
    <ligand>
        <name>Ca(2+)</name>
        <dbReference type="ChEBI" id="CHEBI:29108"/>
        <label>2</label>
    </ligand>
</feature>
<feature type="binding site" evidence="2">
    <location>
        <position position="59"/>
    </location>
    <ligand>
        <name>Ca(2+)</name>
        <dbReference type="ChEBI" id="CHEBI:29108"/>
        <label>2</label>
    </ligand>
</feature>
<feature type="binding site" evidence="2">
    <location>
        <position position="61"/>
    </location>
    <ligand>
        <name>Ca(2+)</name>
        <dbReference type="ChEBI" id="CHEBI:29108"/>
        <label>2</label>
    </ligand>
</feature>
<feature type="binding site" evidence="2">
    <location>
        <position position="63"/>
    </location>
    <ligand>
        <name>Ca(2+)</name>
        <dbReference type="ChEBI" id="CHEBI:29108"/>
        <label>2</label>
    </ligand>
</feature>
<feature type="binding site" evidence="2">
    <location>
        <position position="68"/>
    </location>
    <ligand>
        <name>Ca(2+)</name>
        <dbReference type="ChEBI" id="CHEBI:29108"/>
        <label>2</label>
    </ligand>
</feature>
<feature type="binding site" evidence="2">
    <location>
        <position position="94"/>
    </location>
    <ligand>
        <name>Ca(2+)</name>
        <dbReference type="ChEBI" id="CHEBI:29108"/>
        <label>3</label>
    </ligand>
</feature>
<feature type="binding site" evidence="2">
    <location>
        <position position="96"/>
    </location>
    <ligand>
        <name>Ca(2+)</name>
        <dbReference type="ChEBI" id="CHEBI:29108"/>
        <label>3</label>
    </ligand>
</feature>
<feature type="binding site" evidence="2">
    <location>
        <position position="98"/>
    </location>
    <ligand>
        <name>Ca(2+)</name>
        <dbReference type="ChEBI" id="CHEBI:29108"/>
        <label>3</label>
    </ligand>
</feature>
<feature type="binding site" evidence="2">
    <location>
        <position position="105"/>
    </location>
    <ligand>
        <name>Ca(2+)</name>
        <dbReference type="ChEBI" id="CHEBI:29108"/>
        <label>3</label>
    </ligand>
</feature>
<feature type="binding site" evidence="2">
    <location>
        <position position="130"/>
    </location>
    <ligand>
        <name>Ca(2+)</name>
        <dbReference type="ChEBI" id="CHEBI:29108"/>
        <label>4</label>
    </ligand>
</feature>
<feature type="binding site" evidence="2">
    <location>
        <position position="132"/>
    </location>
    <ligand>
        <name>Ca(2+)</name>
        <dbReference type="ChEBI" id="CHEBI:29108"/>
        <label>4</label>
    </ligand>
</feature>
<feature type="binding site" evidence="2">
    <location>
        <position position="134"/>
    </location>
    <ligand>
        <name>Ca(2+)</name>
        <dbReference type="ChEBI" id="CHEBI:29108"/>
        <label>4</label>
    </ligand>
</feature>
<feature type="binding site" evidence="2">
    <location>
        <position position="136"/>
    </location>
    <ligand>
        <name>Ca(2+)</name>
        <dbReference type="ChEBI" id="CHEBI:29108"/>
        <label>4</label>
    </ligand>
</feature>
<feature type="binding site" evidence="2">
    <location>
        <position position="141"/>
    </location>
    <ligand>
        <name>Ca(2+)</name>
        <dbReference type="ChEBI" id="CHEBI:29108"/>
        <label>4</label>
    </ligand>
</feature>
<feature type="modified residue" description="N-acetylalanine" evidence="1">
    <location>
        <position position="2"/>
    </location>
</feature>
<feature type="modified residue" description="Cysteine methyl ester" evidence="1">
    <location>
        <position position="184"/>
    </location>
</feature>
<feature type="lipid moiety-binding region" description="S-farnesyl cysteine" evidence="1">
    <location>
        <position position="184"/>
    </location>
</feature>
<evidence type="ECO:0000250" key="1"/>
<evidence type="ECO:0000255" key="2">
    <source>
        <dbReference type="PROSITE-ProRule" id="PRU00448"/>
    </source>
</evidence>
<evidence type="ECO:0000256" key="3">
    <source>
        <dbReference type="SAM" id="MobiDB-lite"/>
    </source>
</evidence>
<evidence type="ECO:0000305" key="4"/>
<comment type="function">
    <text evidence="1">Calcium-binding protein that binds and activates CAMK1, a calcium/calmodulin-dependent kinase.</text>
</comment>
<comment type="subcellular location">
    <subcellularLocation>
        <location evidence="1">Membrane</location>
        <topology evidence="1">Lipid-anchor</topology>
    </subcellularLocation>
</comment>
<comment type="similarity">
    <text evidence="4">Belongs to the calmodulin family.</text>
</comment>
<accession>Q8S1Y9</accession>
<accession>B7EIJ6</accession>
<organism>
    <name type="scientific">Oryza sativa subsp. japonica</name>
    <name type="common">Rice</name>
    <dbReference type="NCBI Taxonomy" id="39947"/>
    <lineage>
        <taxon>Eukaryota</taxon>
        <taxon>Viridiplantae</taxon>
        <taxon>Streptophyta</taxon>
        <taxon>Embryophyta</taxon>
        <taxon>Tracheophyta</taxon>
        <taxon>Spermatophyta</taxon>
        <taxon>Magnoliopsida</taxon>
        <taxon>Liliopsida</taxon>
        <taxon>Poales</taxon>
        <taxon>Poaceae</taxon>
        <taxon>BOP clade</taxon>
        <taxon>Oryzoideae</taxon>
        <taxon>Oryzeae</taxon>
        <taxon>Oryzinae</taxon>
        <taxon>Oryza</taxon>
        <taxon>Oryza sativa</taxon>
    </lineage>
</organism>
<keyword id="KW-0007">Acetylation</keyword>
<keyword id="KW-0106">Calcium</keyword>
<keyword id="KW-0449">Lipoprotein</keyword>
<keyword id="KW-0472">Membrane</keyword>
<keyword id="KW-0479">Metal-binding</keyword>
<keyword id="KW-0488">Methylation</keyword>
<keyword id="KW-0636">Prenylation</keyword>
<keyword id="KW-1185">Reference proteome</keyword>
<keyword id="KW-0677">Repeat</keyword>
<protein>
    <recommendedName>
        <fullName>Calmodulin-like protein 1</fullName>
    </recommendedName>
    <alternativeName>
        <fullName>OsCAM61</fullName>
    </alternativeName>
</protein>
<name>CML1_ORYSJ</name>
<reference key="1">
    <citation type="journal article" date="2002" name="Nature">
        <title>The genome sequence and structure of rice chromosome 1.</title>
        <authorList>
            <person name="Sasaki T."/>
            <person name="Matsumoto T."/>
            <person name="Yamamoto K."/>
            <person name="Sakata K."/>
            <person name="Baba T."/>
            <person name="Katayose Y."/>
            <person name="Wu J."/>
            <person name="Niimura Y."/>
            <person name="Cheng Z."/>
            <person name="Nagamura Y."/>
            <person name="Antonio B.A."/>
            <person name="Kanamori H."/>
            <person name="Hosokawa S."/>
            <person name="Masukawa M."/>
            <person name="Arikawa K."/>
            <person name="Chiden Y."/>
            <person name="Hayashi M."/>
            <person name="Okamoto M."/>
            <person name="Ando T."/>
            <person name="Aoki H."/>
            <person name="Arita K."/>
            <person name="Hamada M."/>
            <person name="Harada C."/>
            <person name="Hijishita S."/>
            <person name="Honda M."/>
            <person name="Ichikawa Y."/>
            <person name="Idonuma A."/>
            <person name="Iijima M."/>
            <person name="Ikeda M."/>
            <person name="Ikeno M."/>
            <person name="Ito S."/>
            <person name="Ito T."/>
            <person name="Ito Y."/>
            <person name="Ito Y."/>
            <person name="Iwabuchi A."/>
            <person name="Kamiya K."/>
            <person name="Karasawa W."/>
            <person name="Katagiri S."/>
            <person name="Kikuta A."/>
            <person name="Kobayashi N."/>
            <person name="Kono I."/>
            <person name="Machita K."/>
            <person name="Maehara T."/>
            <person name="Mizuno H."/>
            <person name="Mizubayashi T."/>
            <person name="Mukai Y."/>
            <person name="Nagasaki H."/>
            <person name="Nakashima M."/>
            <person name="Nakama Y."/>
            <person name="Nakamichi Y."/>
            <person name="Nakamura M."/>
            <person name="Namiki N."/>
            <person name="Negishi M."/>
            <person name="Ohta I."/>
            <person name="Ono N."/>
            <person name="Saji S."/>
            <person name="Sakai K."/>
            <person name="Shibata M."/>
            <person name="Shimokawa T."/>
            <person name="Shomura A."/>
            <person name="Song J."/>
            <person name="Takazaki Y."/>
            <person name="Terasawa K."/>
            <person name="Tsuji K."/>
            <person name="Waki K."/>
            <person name="Yamagata H."/>
            <person name="Yamane H."/>
            <person name="Yoshiki S."/>
            <person name="Yoshihara R."/>
            <person name="Yukawa K."/>
            <person name="Zhong H."/>
            <person name="Iwama H."/>
            <person name="Endo T."/>
            <person name="Ito H."/>
            <person name="Hahn J.H."/>
            <person name="Kim H.-I."/>
            <person name="Eun M.-Y."/>
            <person name="Yano M."/>
            <person name="Jiang J."/>
            <person name="Gojobori T."/>
        </authorList>
    </citation>
    <scope>NUCLEOTIDE SEQUENCE [LARGE SCALE GENOMIC DNA]</scope>
    <source>
        <strain>cv. Nipponbare</strain>
    </source>
</reference>
<reference key="2">
    <citation type="journal article" date="2005" name="Nature">
        <title>The map-based sequence of the rice genome.</title>
        <authorList>
            <consortium name="International rice genome sequencing project (IRGSP)"/>
        </authorList>
    </citation>
    <scope>NUCLEOTIDE SEQUENCE [LARGE SCALE GENOMIC DNA]</scope>
    <source>
        <strain>cv. Nipponbare</strain>
    </source>
</reference>
<reference key="3">
    <citation type="journal article" date="2008" name="Nucleic Acids Res.">
        <title>The rice annotation project database (RAP-DB): 2008 update.</title>
        <authorList>
            <consortium name="The rice annotation project (RAP)"/>
        </authorList>
    </citation>
    <scope>GENOME REANNOTATION</scope>
    <source>
        <strain>cv. Nipponbare</strain>
    </source>
</reference>
<reference key="4">
    <citation type="journal article" date="2013" name="Rice">
        <title>Improvement of the Oryza sativa Nipponbare reference genome using next generation sequence and optical map data.</title>
        <authorList>
            <person name="Kawahara Y."/>
            <person name="de la Bastide M."/>
            <person name="Hamilton J.P."/>
            <person name="Kanamori H."/>
            <person name="McCombie W.R."/>
            <person name="Ouyang S."/>
            <person name="Schwartz D.C."/>
            <person name="Tanaka T."/>
            <person name="Wu J."/>
            <person name="Zhou S."/>
            <person name="Childs K.L."/>
            <person name="Davidson R.M."/>
            <person name="Lin H."/>
            <person name="Quesada-Ocampo L."/>
            <person name="Vaillancourt B."/>
            <person name="Sakai H."/>
            <person name="Lee S.S."/>
            <person name="Kim J."/>
            <person name="Numa H."/>
            <person name="Itoh T."/>
            <person name="Buell C.R."/>
            <person name="Matsumoto T."/>
        </authorList>
    </citation>
    <scope>GENOME REANNOTATION</scope>
    <source>
        <strain>cv. Nipponbare</strain>
    </source>
</reference>
<reference key="5">
    <citation type="journal article" date="2005" name="PLoS Biol.">
        <title>The genomes of Oryza sativa: a history of duplications.</title>
        <authorList>
            <person name="Yu J."/>
            <person name="Wang J."/>
            <person name="Lin W."/>
            <person name="Li S."/>
            <person name="Li H."/>
            <person name="Zhou J."/>
            <person name="Ni P."/>
            <person name="Dong W."/>
            <person name="Hu S."/>
            <person name="Zeng C."/>
            <person name="Zhang J."/>
            <person name="Zhang Y."/>
            <person name="Li R."/>
            <person name="Xu Z."/>
            <person name="Li S."/>
            <person name="Li X."/>
            <person name="Zheng H."/>
            <person name="Cong L."/>
            <person name="Lin L."/>
            <person name="Yin J."/>
            <person name="Geng J."/>
            <person name="Li G."/>
            <person name="Shi J."/>
            <person name="Liu J."/>
            <person name="Lv H."/>
            <person name="Li J."/>
            <person name="Wang J."/>
            <person name="Deng Y."/>
            <person name="Ran L."/>
            <person name="Shi X."/>
            <person name="Wang X."/>
            <person name="Wu Q."/>
            <person name="Li C."/>
            <person name="Ren X."/>
            <person name="Wang J."/>
            <person name="Wang X."/>
            <person name="Li D."/>
            <person name="Liu D."/>
            <person name="Zhang X."/>
            <person name="Ji Z."/>
            <person name="Zhao W."/>
            <person name="Sun Y."/>
            <person name="Zhang Z."/>
            <person name="Bao J."/>
            <person name="Han Y."/>
            <person name="Dong L."/>
            <person name="Ji J."/>
            <person name="Chen P."/>
            <person name="Wu S."/>
            <person name="Liu J."/>
            <person name="Xiao Y."/>
            <person name="Bu D."/>
            <person name="Tan J."/>
            <person name="Yang L."/>
            <person name="Ye C."/>
            <person name="Zhang J."/>
            <person name="Xu J."/>
            <person name="Zhou Y."/>
            <person name="Yu Y."/>
            <person name="Zhang B."/>
            <person name="Zhuang S."/>
            <person name="Wei H."/>
            <person name="Liu B."/>
            <person name="Lei M."/>
            <person name="Yu H."/>
            <person name="Li Y."/>
            <person name="Xu H."/>
            <person name="Wei S."/>
            <person name="He X."/>
            <person name="Fang L."/>
            <person name="Zhang Z."/>
            <person name="Zhang Y."/>
            <person name="Huang X."/>
            <person name="Su Z."/>
            <person name="Tong W."/>
            <person name="Li J."/>
            <person name="Tong Z."/>
            <person name="Li S."/>
            <person name="Ye J."/>
            <person name="Wang L."/>
            <person name="Fang L."/>
            <person name="Lei T."/>
            <person name="Chen C.-S."/>
            <person name="Chen H.-C."/>
            <person name="Xu Z."/>
            <person name="Li H."/>
            <person name="Huang H."/>
            <person name="Zhang F."/>
            <person name="Xu H."/>
            <person name="Li N."/>
            <person name="Zhao C."/>
            <person name="Li S."/>
            <person name="Dong L."/>
            <person name="Huang Y."/>
            <person name="Li L."/>
            <person name="Xi Y."/>
            <person name="Qi Q."/>
            <person name="Li W."/>
            <person name="Zhang B."/>
            <person name="Hu W."/>
            <person name="Zhang Y."/>
            <person name="Tian X."/>
            <person name="Jiao Y."/>
            <person name="Liang X."/>
            <person name="Jin J."/>
            <person name="Gao L."/>
            <person name="Zheng W."/>
            <person name="Hao B."/>
            <person name="Liu S.-M."/>
            <person name="Wang W."/>
            <person name="Yuan L."/>
            <person name="Cao M."/>
            <person name="McDermott J."/>
            <person name="Samudrala R."/>
            <person name="Wang J."/>
            <person name="Wong G.K.-S."/>
            <person name="Yang H."/>
        </authorList>
    </citation>
    <scope>NUCLEOTIDE SEQUENCE [LARGE SCALE GENOMIC DNA]</scope>
    <source>
        <strain>cv. Nipponbare</strain>
    </source>
</reference>
<reference key="6">
    <citation type="journal article" date="2003" name="Science">
        <title>Collection, mapping, and annotation of over 28,000 cDNA clones from japonica rice.</title>
        <authorList>
            <consortium name="The rice full-length cDNA consortium"/>
        </authorList>
    </citation>
    <scope>NUCLEOTIDE SEQUENCE [LARGE SCALE MRNA]</scope>
    <source>
        <strain>cv. Nipponbare</strain>
    </source>
</reference>
<reference key="7">
    <citation type="journal article" date="2007" name="BMC Plant Biol.">
        <title>Genome-wide identification and analyses of the rice calmodulin and related potential calcium sensor proteins.</title>
        <authorList>
            <person name="Boonburapong B."/>
            <person name="Buaboocha T."/>
        </authorList>
    </citation>
    <scope>GENE FAMILY</scope>
    <scope>NOMENCLATURE</scope>
</reference>
<dbReference type="EMBL" id="AP003260">
    <property type="protein sequence ID" value="BAB89640.1"/>
    <property type="molecule type" value="Genomic_DNA"/>
</dbReference>
<dbReference type="EMBL" id="AP008207">
    <property type="protein sequence ID" value="BAF06497.1"/>
    <property type="molecule type" value="Genomic_DNA"/>
</dbReference>
<dbReference type="EMBL" id="AP014957">
    <property type="protein sequence ID" value="BAS74867.1"/>
    <property type="molecule type" value="Genomic_DNA"/>
</dbReference>
<dbReference type="EMBL" id="CM000138">
    <property type="protein sequence ID" value="EAZ13896.1"/>
    <property type="molecule type" value="Genomic_DNA"/>
</dbReference>
<dbReference type="EMBL" id="AK070889">
    <property type="protein sequence ID" value="BAG92193.1"/>
    <property type="molecule type" value="mRNA"/>
</dbReference>
<dbReference type="RefSeq" id="XP_015648906.1">
    <property type="nucleotide sequence ID" value="XM_015793420.1"/>
</dbReference>
<dbReference type="SMR" id="Q8S1Y9"/>
<dbReference type="FunCoup" id="Q8S1Y9">
    <property type="interactions" value="247"/>
</dbReference>
<dbReference type="STRING" id="39947.Q8S1Y9"/>
<dbReference type="PaxDb" id="39947-Q8S1Y9"/>
<dbReference type="EnsemblPlants" id="Os01t0810300-01">
    <property type="protein sequence ID" value="Os01t0810300-01"/>
    <property type="gene ID" value="Os01g0810300"/>
</dbReference>
<dbReference type="Gramene" id="Os01t0810300-01">
    <property type="protein sequence ID" value="Os01t0810300-01"/>
    <property type="gene ID" value="Os01g0810300"/>
</dbReference>
<dbReference type="KEGG" id="dosa:Os01g0810300"/>
<dbReference type="eggNOG" id="KOG0027">
    <property type="taxonomic scope" value="Eukaryota"/>
</dbReference>
<dbReference type="HOGENOM" id="CLU_061288_2_0_1"/>
<dbReference type="InParanoid" id="Q8S1Y9"/>
<dbReference type="OMA" id="YICADEL"/>
<dbReference type="OrthoDB" id="727752at2759"/>
<dbReference type="Proteomes" id="UP000000763">
    <property type="component" value="Chromosome 1"/>
</dbReference>
<dbReference type="Proteomes" id="UP000007752">
    <property type="component" value="Chromosome 1"/>
</dbReference>
<dbReference type="Proteomes" id="UP000059680">
    <property type="component" value="Chromosome 1"/>
</dbReference>
<dbReference type="GO" id="GO:0005737">
    <property type="term" value="C:cytoplasm"/>
    <property type="evidence" value="ECO:0000318"/>
    <property type="project" value="GO_Central"/>
</dbReference>
<dbReference type="GO" id="GO:0016020">
    <property type="term" value="C:membrane"/>
    <property type="evidence" value="ECO:0007669"/>
    <property type="project" value="UniProtKB-SubCell"/>
</dbReference>
<dbReference type="GO" id="GO:0005509">
    <property type="term" value="F:calcium ion binding"/>
    <property type="evidence" value="ECO:0000318"/>
    <property type="project" value="GO_Central"/>
</dbReference>
<dbReference type="GO" id="GO:0030234">
    <property type="term" value="F:enzyme regulator activity"/>
    <property type="evidence" value="ECO:0000318"/>
    <property type="project" value="GO_Central"/>
</dbReference>
<dbReference type="CDD" id="cd00051">
    <property type="entry name" value="EFh"/>
    <property type="match status" value="1"/>
</dbReference>
<dbReference type="FunFam" id="1.10.238.10:FF:000006">
    <property type="entry name" value="Calmodulin 1"/>
    <property type="match status" value="1"/>
</dbReference>
<dbReference type="FunFam" id="1.10.238.10:FF:000398">
    <property type="entry name" value="Calmodulin-like protein 3"/>
    <property type="match status" value="1"/>
</dbReference>
<dbReference type="Gene3D" id="1.10.238.10">
    <property type="entry name" value="EF-hand"/>
    <property type="match status" value="3"/>
</dbReference>
<dbReference type="InterPro" id="IPR050230">
    <property type="entry name" value="CALM/Myosin/TropC-like"/>
</dbReference>
<dbReference type="InterPro" id="IPR011992">
    <property type="entry name" value="EF-hand-dom_pair"/>
</dbReference>
<dbReference type="InterPro" id="IPR018247">
    <property type="entry name" value="EF_Hand_1_Ca_BS"/>
</dbReference>
<dbReference type="InterPro" id="IPR002048">
    <property type="entry name" value="EF_hand_dom"/>
</dbReference>
<dbReference type="PANTHER" id="PTHR23048:SF53">
    <property type="entry name" value="CALMODULIN"/>
    <property type="match status" value="1"/>
</dbReference>
<dbReference type="PANTHER" id="PTHR23048">
    <property type="entry name" value="MYOSIN LIGHT CHAIN 1, 3"/>
    <property type="match status" value="1"/>
</dbReference>
<dbReference type="Pfam" id="PF13499">
    <property type="entry name" value="EF-hand_7"/>
    <property type="match status" value="2"/>
</dbReference>
<dbReference type="SMART" id="SM00054">
    <property type="entry name" value="EFh"/>
    <property type="match status" value="4"/>
</dbReference>
<dbReference type="SUPFAM" id="SSF47473">
    <property type="entry name" value="EF-hand"/>
    <property type="match status" value="1"/>
</dbReference>
<dbReference type="PROSITE" id="PS00018">
    <property type="entry name" value="EF_HAND_1"/>
    <property type="match status" value="4"/>
</dbReference>
<dbReference type="PROSITE" id="PS50222">
    <property type="entry name" value="EF_HAND_2"/>
    <property type="match status" value="4"/>
</dbReference>
<sequence length="187" mass="20977">MADQLSEEQIGEFREAFSLFDKDGDGSITTKELGTVMRSLGQNPTEAELQDMISEVDTDSNGNIEFKEFLGLMARKLRDKDSEEELKEAFRVFDKDQNGFISATELRHVMANIGERLTDEEVGEMISEADVDGDGQINYEEFVKCMMAKKRRKRIEEKRDHDGGSRTKSAGPSAAPASKRGQKCVIL</sequence>
<gene>
    <name type="primary">CML1</name>
    <name type="ordered locus">Os01g0810300</name>
    <name type="ordered locus">LOC_Os01g59530</name>
    <name type="ORF">OsJ_003721</name>
    <name type="ORF">P0468B07.35</name>
</gene>
<proteinExistence type="evidence at transcript level"/>